<dbReference type="EC" id="2.7.8.13" evidence="1"/>
<dbReference type="EMBL" id="CP000557">
    <property type="protein sequence ID" value="ABO66360.1"/>
    <property type="molecule type" value="Genomic_DNA"/>
</dbReference>
<dbReference type="RefSeq" id="WP_008878688.1">
    <property type="nucleotide sequence ID" value="NC_009328.1"/>
</dbReference>
<dbReference type="SMR" id="A4IM06"/>
<dbReference type="GeneID" id="87621425"/>
<dbReference type="KEGG" id="gtn:GTNG_0982"/>
<dbReference type="eggNOG" id="COG0472">
    <property type="taxonomic scope" value="Bacteria"/>
</dbReference>
<dbReference type="HOGENOM" id="CLU_023982_0_1_9"/>
<dbReference type="UniPathway" id="UPA00219"/>
<dbReference type="Proteomes" id="UP000001578">
    <property type="component" value="Chromosome"/>
</dbReference>
<dbReference type="GO" id="GO:0005886">
    <property type="term" value="C:plasma membrane"/>
    <property type="evidence" value="ECO:0007669"/>
    <property type="project" value="UniProtKB-SubCell"/>
</dbReference>
<dbReference type="GO" id="GO:0046872">
    <property type="term" value="F:metal ion binding"/>
    <property type="evidence" value="ECO:0007669"/>
    <property type="project" value="UniProtKB-KW"/>
</dbReference>
<dbReference type="GO" id="GO:0008963">
    <property type="term" value="F:phospho-N-acetylmuramoyl-pentapeptide-transferase activity"/>
    <property type="evidence" value="ECO:0007669"/>
    <property type="project" value="UniProtKB-UniRule"/>
</dbReference>
<dbReference type="GO" id="GO:0051992">
    <property type="term" value="F:UDP-N-acetylmuramoyl-L-alanyl-D-glutamyl-meso-2,6-diaminopimelyl-D-alanyl-D-alanine:undecaprenyl-phosphate transferase activity"/>
    <property type="evidence" value="ECO:0007669"/>
    <property type="project" value="RHEA"/>
</dbReference>
<dbReference type="GO" id="GO:0051301">
    <property type="term" value="P:cell division"/>
    <property type="evidence" value="ECO:0007669"/>
    <property type="project" value="UniProtKB-KW"/>
</dbReference>
<dbReference type="GO" id="GO:0071555">
    <property type="term" value="P:cell wall organization"/>
    <property type="evidence" value="ECO:0007669"/>
    <property type="project" value="UniProtKB-KW"/>
</dbReference>
<dbReference type="GO" id="GO:0009252">
    <property type="term" value="P:peptidoglycan biosynthetic process"/>
    <property type="evidence" value="ECO:0007669"/>
    <property type="project" value="UniProtKB-UniRule"/>
</dbReference>
<dbReference type="GO" id="GO:0008360">
    <property type="term" value="P:regulation of cell shape"/>
    <property type="evidence" value="ECO:0007669"/>
    <property type="project" value="UniProtKB-KW"/>
</dbReference>
<dbReference type="CDD" id="cd06852">
    <property type="entry name" value="GT_MraY"/>
    <property type="match status" value="1"/>
</dbReference>
<dbReference type="HAMAP" id="MF_00038">
    <property type="entry name" value="MraY"/>
    <property type="match status" value="1"/>
</dbReference>
<dbReference type="InterPro" id="IPR000715">
    <property type="entry name" value="Glycosyl_transferase_4"/>
</dbReference>
<dbReference type="InterPro" id="IPR003524">
    <property type="entry name" value="PNAcMuramoyl-5peptid_Trfase"/>
</dbReference>
<dbReference type="InterPro" id="IPR018480">
    <property type="entry name" value="PNAcMuramoyl-5peptid_Trfase_CS"/>
</dbReference>
<dbReference type="NCBIfam" id="TIGR00445">
    <property type="entry name" value="mraY"/>
    <property type="match status" value="1"/>
</dbReference>
<dbReference type="PANTHER" id="PTHR22926">
    <property type="entry name" value="PHOSPHO-N-ACETYLMURAMOYL-PENTAPEPTIDE-TRANSFERASE"/>
    <property type="match status" value="1"/>
</dbReference>
<dbReference type="PANTHER" id="PTHR22926:SF5">
    <property type="entry name" value="PHOSPHO-N-ACETYLMURAMOYL-PENTAPEPTIDE-TRANSFERASE HOMOLOG"/>
    <property type="match status" value="1"/>
</dbReference>
<dbReference type="Pfam" id="PF00953">
    <property type="entry name" value="Glycos_transf_4"/>
    <property type="match status" value="1"/>
</dbReference>
<dbReference type="Pfam" id="PF10555">
    <property type="entry name" value="MraY_sig1"/>
    <property type="match status" value="1"/>
</dbReference>
<dbReference type="PROSITE" id="PS01347">
    <property type="entry name" value="MRAY_1"/>
    <property type="match status" value="1"/>
</dbReference>
<dbReference type="PROSITE" id="PS01348">
    <property type="entry name" value="MRAY_2"/>
    <property type="match status" value="1"/>
</dbReference>
<gene>
    <name evidence="1" type="primary">mraY</name>
    <name type="ordered locus">GTNG_0982</name>
</gene>
<proteinExistence type="inferred from homology"/>
<sequence length="324" mass="35189">MPEQIIVIAMAVSFLITVILSPLFIPFLRRLKFGQSIREEGPKSHQKKSGTPTMGGIMILLSIIATTVWVTAKFSVLSAGTYLLLFVTIGYGVLGFLDDMIKVVMKRNLGLTSRQKFIGQLIIAVIFFFVYRQSGFSTALHIPGTDWSFDLGWAYGVLLLFMLVGGSNAVNLTDGLDGLLAGTAAIAFGAYAVLAWNQGQYDVAVFCVAVVGAVLGFLVFNAHPAKVFMGDTGSLALGGAIAAVAVLTKLELLLVVIGGVFVIETLSVIIQVASFKMTGKRVFRMSPLHHHYELVGWSEWRIVVTFWAVGLLFAMLGIYIEVWI</sequence>
<comment type="function">
    <text evidence="1">Catalyzes the initial step of the lipid cycle reactions in the biosynthesis of the cell wall peptidoglycan: transfers peptidoglycan precursor phospho-MurNAc-pentapeptide from UDP-MurNAc-pentapeptide onto the lipid carrier undecaprenyl phosphate, yielding undecaprenyl-pyrophosphoryl-MurNAc-pentapeptide, known as lipid I.</text>
</comment>
<comment type="catalytic activity">
    <reaction evidence="1">
        <text>UDP-N-acetyl-alpha-D-muramoyl-L-alanyl-gamma-D-glutamyl-meso-2,6-diaminopimeloyl-D-alanyl-D-alanine + di-trans,octa-cis-undecaprenyl phosphate = di-trans,octa-cis-undecaprenyl diphospho-N-acetyl-alpha-D-muramoyl-L-alanyl-D-glutamyl-meso-2,6-diaminopimeloyl-D-alanyl-D-alanine + UMP</text>
        <dbReference type="Rhea" id="RHEA:28386"/>
        <dbReference type="ChEBI" id="CHEBI:57865"/>
        <dbReference type="ChEBI" id="CHEBI:60392"/>
        <dbReference type="ChEBI" id="CHEBI:61386"/>
        <dbReference type="ChEBI" id="CHEBI:61387"/>
        <dbReference type="EC" id="2.7.8.13"/>
    </reaction>
</comment>
<comment type="cofactor">
    <cofactor evidence="1">
        <name>Mg(2+)</name>
        <dbReference type="ChEBI" id="CHEBI:18420"/>
    </cofactor>
</comment>
<comment type="pathway">
    <text evidence="1">Cell wall biogenesis; peptidoglycan biosynthesis.</text>
</comment>
<comment type="subcellular location">
    <subcellularLocation>
        <location evidence="1">Cell membrane</location>
        <topology evidence="1">Multi-pass membrane protein</topology>
    </subcellularLocation>
</comment>
<comment type="similarity">
    <text evidence="1">Belongs to the glycosyltransferase 4 family. MraY subfamily.</text>
</comment>
<reference key="1">
    <citation type="journal article" date="2007" name="Proc. Natl. Acad. Sci. U.S.A.">
        <title>Genome and proteome of long-chain alkane degrading Geobacillus thermodenitrificans NG80-2 isolated from a deep-subsurface oil reservoir.</title>
        <authorList>
            <person name="Feng L."/>
            <person name="Wang W."/>
            <person name="Cheng J."/>
            <person name="Ren Y."/>
            <person name="Zhao G."/>
            <person name="Gao C."/>
            <person name="Tang Y."/>
            <person name="Liu X."/>
            <person name="Han W."/>
            <person name="Peng X."/>
            <person name="Liu R."/>
            <person name="Wang L."/>
        </authorList>
    </citation>
    <scope>NUCLEOTIDE SEQUENCE [LARGE SCALE GENOMIC DNA]</scope>
    <source>
        <strain>NG80-2</strain>
    </source>
</reference>
<keyword id="KW-0131">Cell cycle</keyword>
<keyword id="KW-0132">Cell division</keyword>
<keyword id="KW-1003">Cell membrane</keyword>
<keyword id="KW-0133">Cell shape</keyword>
<keyword id="KW-0961">Cell wall biogenesis/degradation</keyword>
<keyword id="KW-0460">Magnesium</keyword>
<keyword id="KW-0472">Membrane</keyword>
<keyword id="KW-0479">Metal-binding</keyword>
<keyword id="KW-0573">Peptidoglycan synthesis</keyword>
<keyword id="KW-0808">Transferase</keyword>
<keyword id="KW-0812">Transmembrane</keyword>
<keyword id="KW-1133">Transmembrane helix</keyword>
<organism>
    <name type="scientific">Geobacillus thermodenitrificans (strain NG80-2)</name>
    <dbReference type="NCBI Taxonomy" id="420246"/>
    <lineage>
        <taxon>Bacteria</taxon>
        <taxon>Bacillati</taxon>
        <taxon>Bacillota</taxon>
        <taxon>Bacilli</taxon>
        <taxon>Bacillales</taxon>
        <taxon>Anoxybacillaceae</taxon>
        <taxon>Geobacillus</taxon>
    </lineage>
</organism>
<evidence type="ECO:0000255" key="1">
    <source>
        <dbReference type="HAMAP-Rule" id="MF_00038"/>
    </source>
</evidence>
<feature type="chain" id="PRO_1000002982" description="Phospho-N-acetylmuramoyl-pentapeptide-transferase">
    <location>
        <begin position="1"/>
        <end position="324"/>
    </location>
</feature>
<feature type="transmembrane region" description="Helical" evidence="1">
    <location>
        <begin position="5"/>
        <end position="25"/>
    </location>
</feature>
<feature type="transmembrane region" description="Helical" evidence="1">
    <location>
        <begin position="52"/>
        <end position="72"/>
    </location>
</feature>
<feature type="transmembrane region" description="Helical" evidence="1">
    <location>
        <begin position="76"/>
        <end position="96"/>
    </location>
</feature>
<feature type="transmembrane region" description="Helical" evidence="1">
    <location>
        <begin position="117"/>
        <end position="137"/>
    </location>
</feature>
<feature type="transmembrane region" description="Helical" evidence="1">
    <location>
        <begin position="147"/>
        <end position="167"/>
    </location>
</feature>
<feature type="transmembrane region" description="Helical" evidence="1">
    <location>
        <begin position="176"/>
        <end position="196"/>
    </location>
</feature>
<feature type="transmembrane region" description="Helical" evidence="1">
    <location>
        <begin position="203"/>
        <end position="223"/>
    </location>
</feature>
<feature type="transmembrane region" description="Helical" evidence="1">
    <location>
        <begin position="227"/>
        <end position="247"/>
    </location>
</feature>
<feature type="transmembrane region" description="Helical" evidence="1">
    <location>
        <begin position="250"/>
        <end position="270"/>
    </location>
</feature>
<feature type="transmembrane region" description="Helical" evidence="1">
    <location>
        <begin position="302"/>
        <end position="322"/>
    </location>
</feature>
<protein>
    <recommendedName>
        <fullName evidence="1">Phospho-N-acetylmuramoyl-pentapeptide-transferase</fullName>
        <ecNumber evidence="1">2.7.8.13</ecNumber>
    </recommendedName>
    <alternativeName>
        <fullName evidence="1">UDP-MurNAc-pentapeptide phosphotransferase</fullName>
    </alternativeName>
</protein>
<accession>A4IM06</accession>
<name>MRAY_GEOTN</name>